<evidence type="ECO:0000250" key="1"/>
<evidence type="ECO:0000250" key="2">
    <source>
        <dbReference type="UniProtKB" id="P29268"/>
    </source>
</evidence>
<evidence type="ECO:0000250" key="3">
    <source>
        <dbReference type="UniProtKB" id="P29279"/>
    </source>
</evidence>
<evidence type="ECO:0000255" key="4"/>
<evidence type="ECO:0000255" key="5">
    <source>
        <dbReference type="PROSITE-ProRule" id="PRU00039"/>
    </source>
</evidence>
<evidence type="ECO:0000255" key="6">
    <source>
        <dbReference type="PROSITE-ProRule" id="PRU00210"/>
    </source>
</evidence>
<evidence type="ECO:0000255" key="7">
    <source>
        <dbReference type="PROSITE-ProRule" id="PRU00220"/>
    </source>
</evidence>
<evidence type="ECO:0000255" key="8">
    <source>
        <dbReference type="PROSITE-ProRule" id="PRU00653"/>
    </source>
</evidence>
<evidence type="ECO:0000305" key="9"/>
<protein>
    <recommendedName>
        <fullName evidence="9">CCN family member 2</fullName>
    </recommendedName>
    <alternativeName>
        <fullName>Cellular communication network factor 2</fullName>
    </alternativeName>
    <alternativeName>
        <fullName>Connective tissue growth factor</fullName>
    </alternativeName>
</protein>
<comment type="function">
    <text evidence="3">Major connective tissue mitoattractant secreted by vascular endothelial cells. Promotes proliferation and differentiation of chondrocytes (By similarity). Is involved in the stimulation of osteoblast differentiation and has a critical role in osteogenesis (By similarity). Mediates heparin- and divalent cation-dependent cell adhesion in many cell types including fibroblasts, myofibroblasts, endothelial and epithelial cells (By similarity). Enhances fibroblast growth factor-induced DNA synthesis (By similarity).</text>
</comment>
<comment type="subunit">
    <text evidence="3">Monomer. Interacts with TSKU.</text>
</comment>
<comment type="subcellular location">
    <subcellularLocation>
        <location evidence="2">Secreted</location>
        <location evidence="2">Extracellular space</location>
        <location evidence="2">Extracellular matrix</location>
    </subcellularLocation>
    <subcellularLocation>
        <location evidence="2">Secreted</location>
    </subcellularLocation>
</comment>
<comment type="similarity">
    <text evidence="9">Belongs to the CCN family.</text>
</comment>
<reference key="1">
    <citation type="submission" date="1997-08" db="EMBL/GenBank/DDBJ databases">
        <title>Bos taurus connective tissue growth factor.</title>
        <authorList>
            <person name="Liliensiek B."/>
            <person name="Lin Z."/>
            <person name="Fotsis T."/>
            <person name="Schimanski M."/>
            <person name="Bierhaus A."/>
            <person name="Kanitz M."/>
            <person name="Kauffmann G."/>
            <person name="Schweigerer L."/>
            <person name="Ziegler R."/>
            <person name="Nawroth P.P."/>
        </authorList>
    </citation>
    <scope>NUCLEOTIDE SEQUENCE [MRNA]</scope>
    <source>
        <tissue>Aorta</tissue>
    </source>
</reference>
<reference key="2">
    <citation type="submission" date="2000-09" db="EMBL/GenBank/DDBJ databases">
        <title>Bovine connective tissue growth factor, organization of the chromosomal gene and demonstration of promoter activity.</title>
        <authorList>
            <person name="Mathahs M."/>
            <person name="Schwitters C."/>
            <person name="Hove M."/>
            <person name="Rupp S."/>
            <person name="Erondu N.E."/>
        </authorList>
    </citation>
    <scope>NUCLEOTIDE SEQUENCE [GENOMIC DNA]</scope>
    <source>
        <tissue>Liver</tissue>
    </source>
</reference>
<reference key="3">
    <citation type="submission" date="2006-02" db="EMBL/GenBank/DDBJ databases">
        <authorList>
            <consortium name="NIH - Mammalian Gene Collection (MGC) project"/>
        </authorList>
    </citation>
    <scope>NUCLEOTIDE SEQUENCE [LARGE SCALE MRNA]</scope>
    <source>
        <strain>Hereford</strain>
        <tissue>Uterus</tissue>
    </source>
</reference>
<feature type="signal peptide" evidence="4">
    <location>
        <begin position="1"/>
        <end position="26"/>
    </location>
</feature>
<feature type="chain" id="PRO_0000014401" description="CCN family member 2">
    <location>
        <begin position="27"/>
        <end position="349"/>
    </location>
</feature>
<feature type="domain" description="IGFBP N-terminal" evidence="8">
    <location>
        <begin position="27"/>
        <end position="98"/>
    </location>
</feature>
<feature type="domain" description="VWFC" evidence="7">
    <location>
        <begin position="101"/>
        <end position="167"/>
    </location>
</feature>
<feature type="domain" description="TSP type-1" evidence="6">
    <location>
        <begin position="198"/>
        <end position="243"/>
    </location>
</feature>
<feature type="domain" description="CTCK" evidence="5">
    <location>
        <begin position="256"/>
        <end position="330"/>
    </location>
</feature>
<feature type="region of interest" description="Heparin-binding" evidence="3">
    <location>
        <begin position="247"/>
        <end position="349"/>
    </location>
</feature>
<feature type="disulfide bond" evidence="8">
    <location>
        <begin position="29"/>
        <end position="54"/>
    </location>
</feature>
<feature type="disulfide bond" evidence="8">
    <location>
        <begin position="33"/>
        <end position="56"/>
    </location>
</feature>
<feature type="disulfide bond" evidence="8">
    <location>
        <begin position="35"/>
        <end position="57"/>
    </location>
</feature>
<feature type="disulfide bond" evidence="8">
    <location>
        <begin position="43"/>
        <end position="60"/>
    </location>
</feature>
<feature type="disulfide bond" evidence="8">
    <location>
        <begin position="68"/>
        <end position="82"/>
    </location>
</feature>
<feature type="disulfide bond" evidence="8">
    <location>
        <begin position="74"/>
        <end position="95"/>
    </location>
</feature>
<feature type="disulfide bond" evidence="1">
    <location>
        <begin position="256"/>
        <end position="293"/>
    </location>
</feature>
<feature type="disulfide bond" evidence="1">
    <location>
        <begin position="273"/>
        <end position="307"/>
    </location>
</feature>
<feature type="disulfide bond" evidence="1">
    <location>
        <begin position="284"/>
        <end position="323"/>
    </location>
</feature>
<feature type="disulfide bond" evidence="1">
    <location>
        <begin position="287"/>
        <end position="325"/>
    </location>
</feature>
<feature type="disulfide bond" evidence="1">
    <location>
        <begin position="292"/>
        <end position="329"/>
    </location>
</feature>
<feature type="sequence conflict" description="In Ref. 1; AAB66596." evidence="9" ref="1">
    <original>D</original>
    <variation>DC</variation>
    <location>
        <position position="28"/>
    </location>
</feature>
<feature type="sequence conflict" description="In Ref. 1; AAB66596." evidence="9" ref="1">
    <location>
        <position position="58"/>
    </location>
</feature>
<feature type="sequence conflict" description="In Ref. 1; AAB66596." evidence="9" ref="1">
    <original>A</original>
    <variation>T</variation>
    <location>
        <position position="88"/>
    </location>
</feature>
<feature type="sequence conflict" description="In Ref. 1; AAB66596." evidence="9" ref="1">
    <original>CV</original>
    <variation>YI</variation>
    <location>
        <begin position="103"/>
        <end position="104"/>
    </location>
</feature>
<feature type="sequence conflict" description="In Ref. 1; AAB66596." evidence="9" ref="1">
    <original>CDEP</original>
    <variation>SRDE</variation>
    <location>
        <begin position="166"/>
        <end position="169"/>
    </location>
</feature>
<feature type="sequence conflict" description="In Ref. 1; AAB66596." evidence="9" ref="1">
    <original>P</original>
    <variation>L</variation>
    <location>
        <position position="184"/>
    </location>
</feature>
<feature type="sequence conflict" description="In Ref. 1; AAB66596." evidence="9" ref="1">
    <original>L</original>
    <variation>Q</variation>
    <location>
        <position position="200"/>
    </location>
</feature>
<feature type="sequence conflict" description="In Ref. 1; AAB66596." evidence="9" ref="1">
    <original>C</original>
    <variation>Y</variation>
    <location>
        <position position="209"/>
    </location>
</feature>
<feature type="sequence conflict" description="In Ref. 1; AAB66596." evidence="9" ref="1">
    <original>E</original>
    <variation>Q</variation>
    <location>
        <position position="269"/>
    </location>
</feature>
<feature type="sequence conflict" description="In Ref. 1; AAB66596." evidence="9" ref="1">
    <original>C</original>
    <variation>F</variation>
    <location>
        <position position="284"/>
    </location>
</feature>
<keyword id="KW-0130">Cell adhesion</keyword>
<keyword id="KW-1015">Disulfide bond</keyword>
<keyword id="KW-0237">DNA synthesis</keyword>
<keyword id="KW-0272">Extracellular matrix</keyword>
<keyword id="KW-0358">Heparin-binding</keyword>
<keyword id="KW-1185">Reference proteome</keyword>
<keyword id="KW-0964">Secreted</keyword>
<keyword id="KW-0732">Signal</keyword>
<proteinExistence type="evidence at transcript level"/>
<gene>
    <name type="primary">CCN2</name>
    <name type="synonym">CTGF</name>
</gene>
<dbReference type="EMBL" id="AF000137">
    <property type="protein sequence ID" value="AAB66596.1"/>
    <property type="molecule type" value="mRNA"/>
</dbReference>
<dbReference type="EMBL" id="AF309555">
    <property type="protein sequence ID" value="AAG30290.1"/>
    <property type="molecule type" value="Genomic_DNA"/>
</dbReference>
<dbReference type="EMBL" id="BC113279">
    <property type="protein sequence ID" value="AAI13280.1"/>
    <property type="molecule type" value="mRNA"/>
</dbReference>
<dbReference type="RefSeq" id="NP_776455.1">
    <property type="nucleotide sequence ID" value="NM_174030.2"/>
</dbReference>
<dbReference type="SMR" id="O18739"/>
<dbReference type="FunCoup" id="O18739">
    <property type="interactions" value="226"/>
</dbReference>
<dbReference type="STRING" id="9913.ENSBTAP00000073256"/>
<dbReference type="PaxDb" id="9913-ENSBTAP00000008357"/>
<dbReference type="Ensembl" id="ENSBTAT00000008357.7">
    <property type="protein sequence ID" value="ENSBTAP00000008357.5"/>
    <property type="gene ID" value="ENSBTAG00000006367.7"/>
</dbReference>
<dbReference type="GeneID" id="281103"/>
<dbReference type="KEGG" id="bta:281103"/>
<dbReference type="CTD" id="1490"/>
<dbReference type="VEuPathDB" id="HostDB:ENSBTAG00000006367"/>
<dbReference type="VGNC" id="VGNC:27794">
    <property type="gene designation" value="CCN2"/>
</dbReference>
<dbReference type="eggNOG" id="ENOG502QQDX">
    <property type="taxonomic scope" value="Eukaryota"/>
</dbReference>
<dbReference type="GeneTree" id="ENSGT00940000155019"/>
<dbReference type="HOGENOM" id="CLU_063247_1_0_1"/>
<dbReference type="InParanoid" id="O18739"/>
<dbReference type="OMA" id="ERDPCDH"/>
<dbReference type="OrthoDB" id="365605at2759"/>
<dbReference type="TreeFam" id="TF326070"/>
<dbReference type="Proteomes" id="UP000009136">
    <property type="component" value="Chromosome 9"/>
</dbReference>
<dbReference type="Bgee" id="ENSBTAG00000006367">
    <property type="expression patterns" value="Expressed in trachea and 103 other cell types or tissues"/>
</dbReference>
<dbReference type="GO" id="GO:0031012">
    <property type="term" value="C:extracellular matrix"/>
    <property type="evidence" value="ECO:0000318"/>
    <property type="project" value="GO_Central"/>
</dbReference>
<dbReference type="GO" id="GO:0005615">
    <property type="term" value="C:extracellular space"/>
    <property type="evidence" value="ECO:0000318"/>
    <property type="project" value="GO_Central"/>
</dbReference>
<dbReference type="GO" id="GO:0005794">
    <property type="term" value="C:Golgi apparatus"/>
    <property type="evidence" value="ECO:0007669"/>
    <property type="project" value="Ensembl"/>
</dbReference>
<dbReference type="GO" id="GO:0008201">
    <property type="term" value="F:heparin binding"/>
    <property type="evidence" value="ECO:0000318"/>
    <property type="project" value="GO_Central"/>
</dbReference>
<dbReference type="GO" id="GO:0005178">
    <property type="term" value="F:integrin binding"/>
    <property type="evidence" value="ECO:0000318"/>
    <property type="project" value="GO_Central"/>
</dbReference>
<dbReference type="GO" id="GO:0001525">
    <property type="term" value="P:angiogenesis"/>
    <property type="evidence" value="ECO:0007669"/>
    <property type="project" value="Ensembl"/>
</dbReference>
<dbReference type="GO" id="GO:0001502">
    <property type="term" value="P:cartilage condensation"/>
    <property type="evidence" value="ECO:0007669"/>
    <property type="project" value="Ensembl"/>
</dbReference>
<dbReference type="GO" id="GO:0007155">
    <property type="term" value="P:cell adhesion"/>
    <property type="evidence" value="ECO:0000318"/>
    <property type="project" value="GO_Central"/>
</dbReference>
<dbReference type="GO" id="GO:0016477">
    <property type="term" value="P:cell migration"/>
    <property type="evidence" value="ECO:0007669"/>
    <property type="project" value="Ensembl"/>
</dbReference>
<dbReference type="GO" id="GO:0007160">
    <property type="term" value="P:cell-matrix adhesion"/>
    <property type="evidence" value="ECO:0007669"/>
    <property type="project" value="Ensembl"/>
</dbReference>
<dbReference type="GO" id="GO:0002062">
    <property type="term" value="P:chondrocyte differentiation"/>
    <property type="evidence" value="ECO:0007669"/>
    <property type="project" value="Ensembl"/>
</dbReference>
<dbReference type="GO" id="GO:0035988">
    <property type="term" value="P:chondrocyte proliferation"/>
    <property type="evidence" value="ECO:0007669"/>
    <property type="project" value="Ensembl"/>
</dbReference>
<dbReference type="GO" id="GO:0071897">
    <property type="term" value="P:DNA biosynthetic process"/>
    <property type="evidence" value="ECO:0007669"/>
    <property type="project" value="UniProtKB-KW"/>
</dbReference>
<dbReference type="GO" id="GO:0008543">
    <property type="term" value="P:fibroblast growth factor receptor signaling pathway"/>
    <property type="evidence" value="ECO:0007669"/>
    <property type="project" value="Ensembl"/>
</dbReference>
<dbReference type="GO" id="GO:0007229">
    <property type="term" value="P:integrin-mediated signaling pathway"/>
    <property type="evidence" value="ECO:0007669"/>
    <property type="project" value="Ensembl"/>
</dbReference>
<dbReference type="GO" id="GO:0030324">
    <property type="term" value="P:lung development"/>
    <property type="evidence" value="ECO:0007669"/>
    <property type="project" value="Ensembl"/>
</dbReference>
<dbReference type="GO" id="GO:0010629">
    <property type="term" value="P:negative regulation of gene expression"/>
    <property type="evidence" value="ECO:0007669"/>
    <property type="project" value="Ensembl"/>
</dbReference>
<dbReference type="GO" id="GO:0001503">
    <property type="term" value="P:ossification"/>
    <property type="evidence" value="ECO:0007669"/>
    <property type="project" value="Ensembl"/>
</dbReference>
<dbReference type="GO" id="GO:0045597">
    <property type="term" value="P:positive regulation of cell differentiation"/>
    <property type="evidence" value="ECO:0000318"/>
    <property type="project" value="GO_Central"/>
</dbReference>
<dbReference type="GO" id="GO:0070374">
    <property type="term" value="P:positive regulation of ERK1 and ERK2 cascade"/>
    <property type="evidence" value="ECO:0007669"/>
    <property type="project" value="Ensembl"/>
</dbReference>
<dbReference type="GO" id="GO:0046330">
    <property type="term" value="P:positive regulation of JNK cascade"/>
    <property type="evidence" value="ECO:0007669"/>
    <property type="project" value="Ensembl"/>
</dbReference>
<dbReference type="GO" id="GO:0051496">
    <property type="term" value="P:positive regulation of stress fiber assembly"/>
    <property type="evidence" value="ECO:0007669"/>
    <property type="project" value="Ensembl"/>
</dbReference>
<dbReference type="GO" id="GO:0072593">
    <property type="term" value="P:reactive oxygen species metabolic process"/>
    <property type="evidence" value="ECO:0007669"/>
    <property type="project" value="Ensembl"/>
</dbReference>
<dbReference type="GO" id="GO:0032330">
    <property type="term" value="P:regulation of chondrocyte differentiation"/>
    <property type="evidence" value="ECO:0007669"/>
    <property type="project" value="Ensembl"/>
</dbReference>
<dbReference type="GO" id="GO:0007165">
    <property type="term" value="P:signal transduction"/>
    <property type="evidence" value="ECO:0000318"/>
    <property type="project" value="GO_Central"/>
</dbReference>
<dbReference type="GO" id="GO:0001894">
    <property type="term" value="P:tissue homeostasis"/>
    <property type="evidence" value="ECO:0007669"/>
    <property type="project" value="Ensembl"/>
</dbReference>
<dbReference type="FunFam" id="2.20.100.10:FF:000036">
    <property type="entry name" value="Connective tissue growth factor (Predicted)"/>
    <property type="match status" value="1"/>
</dbReference>
<dbReference type="Gene3D" id="2.20.100.10">
    <property type="entry name" value="Thrombospondin type-1 (TSP1) repeat"/>
    <property type="match status" value="1"/>
</dbReference>
<dbReference type="InterPro" id="IPR050941">
    <property type="entry name" value="CCN"/>
</dbReference>
<dbReference type="InterPro" id="IPR006207">
    <property type="entry name" value="Cys_knot_C"/>
</dbReference>
<dbReference type="InterPro" id="IPR006208">
    <property type="entry name" value="Glyco_hormone_CN"/>
</dbReference>
<dbReference type="InterPro" id="IPR009030">
    <property type="entry name" value="Growth_fac_rcpt_cys_sf"/>
</dbReference>
<dbReference type="InterPro" id="IPR000867">
    <property type="entry name" value="IGFBP-like"/>
</dbReference>
<dbReference type="InterPro" id="IPR012395">
    <property type="entry name" value="IGFBP_CNN"/>
</dbReference>
<dbReference type="InterPro" id="IPR017891">
    <property type="entry name" value="Insulin_GF-bd_Cys-rich_CS"/>
</dbReference>
<dbReference type="InterPro" id="IPR043973">
    <property type="entry name" value="TSP1_CCN"/>
</dbReference>
<dbReference type="InterPro" id="IPR000884">
    <property type="entry name" value="TSP1_rpt"/>
</dbReference>
<dbReference type="InterPro" id="IPR036383">
    <property type="entry name" value="TSP1_rpt_sf"/>
</dbReference>
<dbReference type="InterPro" id="IPR001007">
    <property type="entry name" value="VWF_dom"/>
</dbReference>
<dbReference type="PANTHER" id="PTHR11348:SF7">
    <property type="entry name" value="CCN FAMILY MEMBER 2"/>
    <property type="match status" value="1"/>
</dbReference>
<dbReference type="PANTHER" id="PTHR11348">
    <property type="entry name" value="CONNECTIVE TISSUE GROWTH FACTOR-RELATED"/>
    <property type="match status" value="1"/>
</dbReference>
<dbReference type="Pfam" id="PF00007">
    <property type="entry name" value="Cys_knot"/>
    <property type="match status" value="1"/>
</dbReference>
<dbReference type="Pfam" id="PF00219">
    <property type="entry name" value="IGFBP"/>
    <property type="match status" value="1"/>
</dbReference>
<dbReference type="Pfam" id="PF19035">
    <property type="entry name" value="TSP1_CCN"/>
    <property type="match status" value="1"/>
</dbReference>
<dbReference type="Pfam" id="PF00093">
    <property type="entry name" value="VWC"/>
    <property type="match status" value="1"/>
</dbReference>
<dbReference type="PIRSF" id="PIRSF036495">
    <property type="entry name" value="IGFBP_rP_CNN"/>
    <property type="match status" value="1"/>
</dbReference>
<dbReference type="SMART" id="SM00041">
    <property type="entry name" value="CT"/>
    <property type="match status" value="1"/>
</dbReference>
<dbReference type="SMART" id="SM00121">
    <property type="entry name" value="IB"/>
    <property type="match status" value="1"/>
</dbReference>
<dbReference type="SMART" id="SM00209">
    <property type="entry name" value="TSP1"/>
    <property type="match status" value="1"/>
</dbReference>
<dbReference type="SMART" id="SM00214">
    <property type="entry name" value="VWC"/>
    <property type="match status" value="1"/>
</dbReference>
<dbReference type="SUPFAM" id="SSF57603">
    <property type="entry name" value="FnI-like domain"/>
    <property type="match status" value="1"/>
</dbReference>
<dbReference type="SUPFAM" id="SSF57184">
    <property type="entry name" value="Growth factor receptor domain"/>
    <property type="match status" value="1"/>
</dbReference>
<dbReference type="SUPFAM" id="SSF82895">
    <property type="entry name" value="TSP-1 type 1 repeat"/>
    <property type="match status" value="1"/>
</dbReference>
<dbReference type="PROSITE" id="PS01185">
    <property type="entry name" value="CTCK_1"/>
    <property type="match status" value="1"/>
</dbReference>
<dbReference type="PROSITE" id="PS01225">
    <property type="entry name" value="CTCK_2"/>
    <property type="match status" value="1"/>
</dbReference>
<dbReference type="PROSITE" id="PS00222">
    <property type="entry name" value="IGFBP_N_1"/>
    <property type="match status" value="1"/>
</dbReference>
<dbReference type="PROSITE" id="PS51323">
    <property type="entry name" value="IGFBP_N_2"/>
    <property type="match status" value="1"/>
</dbReference>
<dbReference type="PROSITE" id="PS50092">
    <property type="entry name" value="TSP1"/>
    <property type="match status" value="1"/>
</dbReference>
<dbReference type="PROSITE" id="PS01208">
    <property type="entry name" value="VWFC_1"/>
    <property type="match status" value="1"/>
</dbReference>
<dbReference type="PROSITE" id="PS50184">
    <property type="entry name" value="VWFC_2"/>
    <property type="match status" value="1"/>
</dbReference>
<name>CCN2_BOVIN</name>
<accession>O18739</accession>
<accession>Q2HJ71</accession>
<accession>Q9GL71</accession>
<organism>
    <name type="scientific">Bos taurus</name>
    <name type="common">Bovine</name>
    <dbReference type="NCBI Taxonomy" id="9913"/>
    <lineage>
        <taxon>Eukaryota</taxon>
        <taxon>Metazoa</taxon>
        <taxon>Chordata</taxon>
        <taxon>Craniata</taxon>
        <taxon>Vertebrata</taxon>
        <taxon>Euteleostomi</taxon>
        <taxon>Mammalia</taxon>
        <taxon>Eutheria</taxon>
        <taxon>Laurasiatheria</taxon>
        <taxon>Artiodactyla</taxon>
        <taxon>Ruminantia</taxon>
        <taxon>Pecora</taxon>
        <taxon>Bovidae</taxon>
        <taxon>Bovinae</taxon>
        <taxon>Bos</taxon>
    </lineage>
</organism>
<sequence length="349" mass="37924">MSATGLGPVRCAFVLLLALCSRPASSQDCSAPCQCPAGPAPRCPAGVSLVLDGCGCCRVCAKQLSELCTERDPCDPHKGLFCDFGSPANRKIGVCTAKDGAPCVFGGTVYQSGESFQSSCKYQCTCLDGSVGCVPLCSVDVRLPSPDCPFPRRVKLPGKCCEEWVCDEPKEHTVVGPALAAYRPEDTFGPDPTMIRANCLVQTTEWSACSKTCGMGISTRVTNDNAFCRLEKQSRLCMVRPCEADLEENIKKGKKCIRTPKISKPIKFELSGCTSMKTYRAKFCGVCTDGRCCTPHRTTTLPVEFKCPDGEVMKKSMMFIKTCACHYNCPGDNDIFESLYYRKMYGDMA</sequence>